<protein>
    <recommendedName>
        <fullName evidence="1">Protoheme IX farnesyltransferase</fullName>
        <ecNumber evidence="1">2.5.1.141</ecNumber>
    </recommendedName>
    <alternativeName>
        <fullName evidence="1">Heme B farnesyltransferase</fullName>
    </alternativeName>
    <alternativeName>
        <fullName evidence="1">Heme O synthase</fullName>
    </alternativeName>
</protein>
<feature type="chain" id="PRO_0000346035" description="Protoheme IX farnesyltransferase">
    <location>
        <begin position="1"/>
        <end position="345"/>
    </location>
</feature>
<feature type="transmembrane region" description="Helical" evidence="1">
    <location>
        <begin position="33"/>
        <end position="53"/>
    </location>
</feature>
<feature type="transmembrane region" description="Helical" evidence="1">
    <location>
        <begin position="54"/>
        <end position="74"/>
    </location>
</feature>
<feature type="transmembrane region" description="Helical" evidence="1">
    <location>
        <begin position="105"/>
        <end position="125"/>
    </location>
</feature>
<feature type="transmembrane region" description="Helical" evidence="1">
    <location>
        <begin position="126"/>
        <end position="146"/>
    </location>
</feature>
<feature type="transmembrane region" description="Helical" evidence="1">
    <location>
        <begin position="154"/>
        <end position="174"/>
    </location>
</feature>
<feature type="transmembrane region" description="Helical" evidence="1">
    <location>
        <begin position="182"/>
        <end position="202"/>
    </location>
</feature>
<feature type="transmembrane region" description="Helical" evidence="1">
    <location>
        <begin position="226"/>
        <end position="246"/>
    </location>
</feature>
<feature type="transmembrane region" description="Helical" evidence="1">
    <location>
        <begin position="247"/>
        <end position="267"/>
    </location>
</feature>
<feature type="transmembrane region" description="Helical" evidence="1">
    <location>
        <begin position="315"/>
        <end position="335"/>
    </location>
</feature>
<proteinExistence type="inferred from homology"/>
<reference key="1">
    <citation type="submission" date="2008-01" db="EMBL/GenBank/DDBJ databases">
        <title>Complete sequence of chromosome of Caulobacter sp. K31.</title>
        <authorList>
            <consortium name="US DOE Joint Genome Institute"/>
            <person name="Copeland A."/>
            <person name="Lucas S."/>
            <person name="Lapidus A."/>
            <person name="Barry K."/>
            <person name="Glavina del Rio T."/>
            <person name="Dalin E."/>
            <person name="Tice H."/>
            <person name="Pitluck S."/>
            <person name="Bruce D."/>
            <person name="Goodwin L."/>
            <person name="Thompson L.S."/>
            <person name="Brettin T."/>
            <person name="Detter J.C."/>
            <person name="Han C."/>
            <person name="Schmutz J."/>
            <person name="Larimer F."/>
            <person name="Land M."/>
            <person name="Hauser L."/>
            <person name="Kyrpides N."/>
            <person name="Kim E."/>
            <person name="Stephens C."/>
            <person name="Richardson P."/>
        </authorList>
    </citation>
    <scope>NUCLEOTIDE SEQUENCE [LARGE SCALE GENOMIC DNA]</scope>
    <source>
        <strain>K31</strain>
    </source>
</reference>
<name>COXX_CAUSK</name>
<dbReference type="EC" id="2.5.1.141" evidence="1"/>
<dbReference type="EMBL" id="CP000927">
    <property type="protein sequence ID" value="ABZ73624.1"/>
    <property type="molecule type" value="Genomic_DNA"/>
</dbReference>
<dbReference type="SMR" id="B0T0X6"/>
<dbReference type="STRING" id="366602.Caul_4504"/>
<dbReference type="KEGG" id="cak:Caul_4504"/>
<dbReference type="eggNOG" id="COG0109">
    <property type="taxonomic scope" value="Bacteria"/>
</dbReference>
<dbReference type="HOGENOM" id="CLU_029631_0_2_5"/>
<dbReference type="OrthoDB" id="9814417at2"/>
<dbReference type="UniPathway" id="UPA00834">
    <property type="reaction ID" value="UER00712"/>
</dbReference>
<dbReference type="GO" id="GO:0005886">
    <property type="term" value="C:plasma membrane"/>
    <property type="evidence" value="ECO:0007669"/>
    <property type="project" value="UniProtKB-SubCell"/>
</dbReference>
<dbReference type="GO" id="GO:0008495">
    <property type="term" value="F:protoheme IX farnesyltransferase activity"/>
    <property type="evidence" value="ECO:0007669"/>
    <property type="project" value="UniProtKB-UniRule"/>
</dbReference>
<dbReference type="GO" id="GO:0048034">
    <property type="term" value="P:heme O biosynthetic process"/>
    <property type="evidence" value="ECO:0007669"/>
    <property type="project" value="UniProtKB-UniRule"/>
</dbReference>
<dbReference type="CDD" id="cd13957">
    <property type="entry name" value="PT_UbiA_Cox10"/>
    <property type="match status" value="1"/>
</dbReference>
<dbReference type="Gene3D" id="1.10.357.140">
    <property type="entry name" value="UbiA prenyltransferase"/>
    <property type="match status" value="1"/>
</dbReference>
<dbReference type="HAMAP" id="MF_00154">
    <property type="entry name" value="CyoE_CtaB"/>
    <property type="match status" value="1"/>
</dbReference>
<dbReference type="InterPro" id="IPR006369">
    <property type="entry name" value="Protohaem_IX_farnesylTrfase"/>
</dbReference>
<dbReference type="InterPro" id="IPR000537">
    <property type="entry name" value="UbiA_prenyltransferase"/>
</dbReference>
<dbReference type="InterPro" id="IPR030470">
    <property type="entry name" value="UbiA_prenylTrfase_CS"/>
</dbReference>
<dbReference type="InterPro" id="IPR044878">
    <property type="entry name" value="UbiA_sf"/>
</dbReference>
<dbReference type="NCBIfam" id="TIGR01473">
    <property type="entry name" value="cyoE_ctaB"/>
    <property type="match status" value="1"/>
</dbReference>
<dbReference type="NCBIfam" id="NF003349">
    <property type="entry name" value="PRK04375.1-2"/>
    <property type="match status" value="1"/>
</dbReference>
<dbReference type="PANTHER" id="PTHR43448:SF7">
    <property type="entry name" value="4-HYDROXYBENZOATE SOLANESYLTRANSFERASE"/>
    <property type="match status" value="1"/>
</dbReference>
<dbReference type="PANTHER" id="PTHR43448">
    <property type="entry name" value="PROTOHEME IX FARNESYLTRANSFERASE, MITOCHONDRIAL"/>
    <property type="match status" value="1"/>
</dbReference>
<dbReference type="Pfam" id="PF01040">
    <property type="entry name" value="UbiA"/>
    <property type="match status" value="1"/>
</dbReference>
<dbReference type="PROSITE" id="PS00943">
    <property type="entry name" value="UBIA"/>
    <property type="match status" value="1"/>
</dbReference>
<sequence>MARSTVLTPEDEATPAVRHARWQDYFQLMKPRVMSLVVFTALTGLLAARTPIHPLLGAVAVLCIAIGAGASGALNMWYDADIDAKMRRTRGRPVPMGLVKGEEAATLGVVLSLLSVMLMGMAINWLAAGLLAFTIVFYAVVYTMWLKRWTAQNIVIGGLAGALPPAIGWAAATGHAPLNAWLMVLIIFLWTPPHFWALSLYISTDYAKAGVPMLPVVKGAKETRKQILLYSLALIPVCLAPAFTGLGGWLYLAVSGLGGLVFLTLAVRVFRSLAGEASDPRPADRDLYEVGEAAAKRGKPVGDAKHARNLFAFSILYLFALFAALLAEAVLGLPILNLHVLELPL</sequence>
<organism>
    <name type="scientific">Caulobacter sp. (strain K31)</name>
    <dbReference type="NCBI Taxonomy" id="366602"/>
    <lineage>
        <taxon>Bacteria</taxon>
        <taxon>Pseudomonadati</taxon>
        <taxon>Pseudomonadota</taxon>
        <taxon>Alphaproteobacteria</taxon>
        <taxon>Caulobacterales</taxon>
        <taxon>Caulobacteraceae</taxon>
        <taxon>Caulobacter</taxon>
    </lineage>
</organism>
<evidence type="ECO:0000255" key="1">
    <source>
        <dbReference type="HAMAP-Rule" id="MF_00154"/>
    </source>
</evidence>
<comment type="function">
    <text evidence="1">Converts heme B (protoheme IX) to heme O by substitution of the vinyl group on carbon 2 of heme B porphyrin ring with a hydroxyethyl farnesyl side group.</text>
</comment>
<comment type="catalytic activity">
    <reaction evidence="1">
        <text>heme b + (2E,6E)-farnesyl diphosphate + H2O = Fe(II)-heme o + diphosphate</text>
        <dbReference type="Rhea" id="RHEA:28070"/>
        <dbReference type="ChEBI" id="CHEBI:15377"/>
        <dbReference type="ChEBI" id="CHEBI:33019"/>
        <dbReference type="ChEBI" id="CHEBI:60344"/>
        <dbReference type="ChEBI" id="CHEBI:60530"/>
        <dbReference type="ChEBI" id="CHEBI:175763"/>
        <dbReference type="EC" id="2.5.1.141"/>
    </reaction>
</comment>
<comment type="pathway">
    <text evidence="1">Porphyrin-containing compound metabolism; heme O biosynthesis; heme O from protoheme: step 1/1.</text>
</comment>
<comment type="subcellular location">
    <subcellularLocation>
        <location evidence="1">Cell inner membrane</location>
        <topology evidence="1">Multi-pass membrane protein</topology>
    </subcellularLocation>
</comment>
<comment type="miscellaneous">
    <text evidence="1">Carbon 2 of the heme B porphyrin ring is defined according to the Fischer nomenclature.</text>
</comment>
<comment type="similarity">
    <text evidence="1">Belongs to the UbiA prenyltransferase family. Protoheme IX farnesyltransferase subfamily.</text>
</comment>
<keyword id="KW-0997">Cell inner membrane</keyword>
<keyword id="KW-1003">Cell membrane</keyword>
<keyword id="KW-0350">Heme biosynthesis</keyword>
<keyword id="KW-0472">Membrane</keyword>
<keyword id="KW-0808">Transferase</keyword>
<keyword id="KW-0812">Transmembrane</keyword>
<keyword id="KW-1133">Transmembrane helix</keyword>
<gene>
    <name evidence="1" type="primary">ctaB</name>
    <name type="ordered locus">Caul_4504</name>
</gene>
<accession>B0T0X6</accession>